<name>PFD3_MOUSE</name>
<feature type="initiator methionine" description="Removed" evidence="2">
    <location>
        <position position="1"/>
    </location>
</feature>
<feature type="chain" id="PRO_0000153653" description="Prefoldin subunit 3">
    <location>
        <begin position="2"/>
        <end position="196"/>
    </location>
</feature>
<feature type="modified residue" description="N-acetylalanine" evidence="2">
    <location>
        <position position="2"/>
    </location>
</feature>
<feature type="modified residue" description="N6-acetyllysine" evidence="2">
    <location>
        <position position="58"/>
    </location>
</feature>
<accession>P61759</accession>
<accession>O55228</accession>
<accession>Q15765</accession>
<accession>Q3U6M9</accession>
<accession>Q9CPZ0</accession>
<reference key="1">
    <citation type="journal article" date="2005" name="Science">
        <title>The transcriptional landscape of the mammalian genome.</title>
        <authorList>
            <person name="Carninci P."/>
            <person name="Kasukawa T."/>
            <person name="Katayama S."/>
            <person name="Gough J."/>
            <person name="Frith M.C."/>
            <person name="Maeda N."/>
            <person name="Oyama R."/>
            <person name="Ravasi T."/>
            <person name="Lenhard B."/>
            <person name="Wells C."/>
            <person name="Kodzius R."/>
            <person name="Shimokawa K."/>
            <person name="Bajic V.B."/>
            <person name="Brenner S.E."/>
            <person name="Batalov S."/>
            <person name="Forrest A.R."/>
            <person name="Zavolan M."/>
            <person name="Davis M.J."/>
            <person name="Wilming L.G."/>
            <person name="Aidinis V."/>
            <person name="Allen J.E."/>
            <person name="Ambesi-Impiombato A."/>
            <person name="Apweiler R."/>
            <person name="Aturaliya R.N."/>
            <person name="Bailey T.L."/>
            <person name="Bansal M."/>
            <person name="Baxter L."/>
            <person name="Beisel K.W."/>
            <person name="Bersano T."/>
            <person name="Bono H."/>
            <person name="Chalk A.M."/>
            <person name="Chiu K.P."/>
            <person name="Choudhary V."/>
            <person name="Christoffels A."/>
            <person name="Clutterbuck D.R."/>
            <person name="Crowe M.L."/>
            <person name="Dalla E."/>
            <person name="Dalrymple B.P."/>
            <person name="de Bono B."/>
            <person name="Della Gatta G."/>
            <person name="di Bernardo D."/>
            <person name="Down T."/>
            <person name="Engstrom P."/>
            <person name="Fagiolini M."/>
            <person name="Faulkner G."/>
            <person name="Fletcher C.F."/>
            <person name="Fukushima T."/>
            <person name="Furuno M."/>
            <person name="Futaki S."/>
            <person name="Gariboldi M."/>
            <person name="Georgii-Hemming P."/>
            <person name="Gingeras T.R."/>
            <person name="Gojobori T."/>
            <person name="Green R.E."/>
            <person name="Gustincich S."/>
            <person name="Harbers M."/>
            <person name="Hayashi Y."/>
            <person name="Hensch T.K."/>
            <person name="Hirokawa N."/>
            <person name="Hill D."/>
            <person name="Huminiecki L."/>
            <person name="Iacono M."/>
            <person name="Ikeo K."/>
            <person name="Iwama A."/>
            <person name="Ishikawa T."/>
            <person name="Jakt M."/>
            <person name="Kanapin A."/>
            <person name="Katoh M."/>
            <person name="Kawasawa Y."/>
            <person name="Kelso J."/>
            <person name="Kitamura H."/>
            <person name="Kitano H."/>
            <person name="Kollias G."/>
            <person name="Krishnan S.P."/>
            <person name="Kruger A."/>
            <person name="Kummerfeld S.K."/>
            <person name="Kurochkin I.V."/>
            <person name="Lareau L.F."/>
            <person name="Lazarevic D."/>
            <person name="Lipovich L."/>
            <person name="Liu J."/>
            <person name="Liuni S."/>
            <person name="McWilliam S."/>
            <person name="Madan Babu M."/>
            <person name="Madera M."/>
            <person name="Marchionni L."/>
            <person name="Matsuda H."/>
            <person name="Matsuzawa S."/>
            <person name="Miki H."/>
            <person name="Mignone F."/>
            <person name="Miyake S."/>
            <person name="Morris K."/>
            <person name="Mottagui-Tabar S."/>
            <person name="Mulder N."/>
            <person name="Nakano N."/>
            <person name="Nakauchi H."/>
            <person name="Ng P."/>
            <person name="Nilsson R."/>
            <person name="Nishiguchi S."/>
            <person name="Nishikawa S."/>
            <person name="Nori F."/>
            <person name="Ohara O."/>
            <person name="Okazaki Y."/>
            <person name="Orlando V."/>
            <person name="Pang K.C."/>
            <person name="Pavan W.J."/>
            <person name="Pavesi G."/>
            <person name="Pesole G."/>
            <person name="Petrovsky N."/>
            <person name="Piazza S."/>
            <person name="Reed J."/>
            <person name="Reid J.F."/>
            <person name="Ring B.Z."/>
            <person name="Ringwald M."/>
            <person name="Rost B."/>
            <person name="Ruan Y."/>
            <person name="Salzberg S.L."/>
            <person name="Sandelin A."/>
            <person name="Schneider C."/>
            <person name="Schoenbach C."/>
            <person name="Sekiguchi K."/>
            <person name="Semple C.A."/>
            <person name="Seno S."/>
            <person name="Sessa L."/>
            <person name="Sheng Y."/>
            <person name="Shibata Y."/>
            <person name="Shimada H."/>
            <person name="Shimada K."/>
            <person name="Silva D."/>
            <person name="Sinclair B."/>
            <person name="Sperling S."/>
            <person name="Stupka E."/>
            <person name="Sugiura K."/>
            <person name="Sultana R."/>
            <person name="Takenaka Y."/>
            <person name="Taki K."/>
            <person name="Tammoja K."/>
            <person name="Tan S.L."/>
            <person name="Tang S."/>
            <person name="Taylor M.S."/>
            <person name="Tegner J."/>
            <person name="Teichmann S.A."/>
            <person name="Ueda H.R."/>
            <person name="van Nimwegen E."/>
            <person name="Verardo R."/>
            <person name="Wei C.L."/>
            <person name="Yagi K."/>
            <person name="Yamanishi H."/>
            <person name="Zabarovsky E."/>
            <person name="Zhu S."/>
            <person name="Zimmer A."/>
            <person name="Hide W."/>
            <person name="Bult C."/>
            <person name="Grimmond S.M."/>
            <person name="Teasdale R.D."/>
            <person name="Liu E.T."/>
            <person name="Brusic V."/>
            <person name="Quackenbush J."/>
            <person name="Wahlestedt C."/>
            <person name="Mattick J.S."/>
            <person name="Hume D.A."/>
            <person name="Kai C."/>
            <person name="Sasaki D."/>
            <person name="Tomaru Y."/>
            <person name="Fukuda S."/>
            <person name="Kanamori-Katayama M."/>
            <person name="Suzuki M."/>
            <person name="Aoki J."/>
            <person name="Arakawa T."/>
            <person name="Iida J."/>
            <person name="Imamura K."/>
            <person name="Itoh M."/>
            <person name="Kato T."/>
            <person name="Kawaji H."/>
            <person name="Kawagashira N."/>
            <person name="Kawashima T."/>
            <person name="Kojima M."/>
            <person name="Kondo S."/>
            <person name="Konno H."/>
            <person name="Nakano K."/>
            <person name="Ninomiya N."/>
            <person name="Nishio T."/>
            <person name="Okada M."/>
            <person name="Plessy C."/>
            <person name="Shibata K."/>
            <person name="Shiraki T."/>
            <person name="Suzuki S."/>
            <person name="Tagami M."/>
            <person name="Waki K."/>
            <person name="Watahiki A."/>
            <person name="Okamura-Oho Y."/>
            <person name="Suzuki H."/>
            <person name="Kawai J."/>
            <person name="Hayashizaki Y."/>
        </authorList>
    </citation>
    <scope>NUCLEOTIDE SEQUENCE [LARGE SCALE MRNA]</scope>
    <source>
        <strain>C57BL/6J</strain>
        <tissue>Bone marrow</tissue>
        <tissue>Kidney</tissue>
        <tissue>Stomach</tissue>
        <tissue>Testis</tissue>
    </source>
</reference>
<reference key="2">
    <citation type="journal article" date="1997" name="Genomics">
        <title>Characterization of the gene (VBP1) and transcript for the von Hippel-Lindau binding protein and isolation of the highly conserved murine homologue.</title>
        <authorList>
            <person name="Brinke A."/>
            <person name="Green P.M."/>
            <person name="Giannelli F."/>
        </authorList>
    </citation>
    <scope>NUCLEOTIDE SEQUENCE [MRNA] OF 6-196</scope>
    <source>
        <strain>BALB/cJ</strain>
        <tissue>Brain</tissue>
    </source>
</reference>
<reference key="3">
    <citation type="journal article" date="2010" name="Cell">
        <title>A tissue-specific atlas of mouse protein phosphorylation and expression.</title>
        <authorList>
            <person name="Huttlin E.L."/>
            <person name="Jedrychowski M.P."/>
            <person name="Elias J.E."/>
            <person name="Goswami T."/>
            <person name="Rad R."/>
            <person name="Beausoleil S.A."/>
            <person name="Villen J."/>
            <person name="Haas W."/>
            <person name="Sowa M.E."/>
            <person name="Gygi S.P."/>
        </authorList>
    </citation>
    <scope>IDENTIFICATION BY MASS SPECTROMETRY [LARGE SCALE ANALYSIS]</scope>
    <source>
        <tissue>Brain</tissue>
        <tissue>Brown adipose tissue</tissue>
        <tissue>Heart</tissue>
        <tissue>Kidney</tissue>
        <tissue>Liver</tissue>
        <tissue>Lung</tissue>
        <tissue>Pancreas</tissue>
        <tissue>Spleen</tissue>
        <tissue>Testis</tissue>
    </source>
</reference>
<sequence length="196" mass="22436">MAAAKDGCGLETAAGNGRRLHLGIPEAVFVEDVDSFMKQPGNETADTVLKKLDEQYQKYKFMELNLAQKKRRLKGQIPEIKQTLEILKYMQKKKESTNSMETRFLLADNLYCKASVPPTDKVCLWLGANVMLEYDIDEAQALLEKNLSTATKNLDSLEEDLDFLRDQFTTTEVNMARVYNWDVKRRNKDDSTKNKA</sequence>
<organism>
    <name type="scientific">Mus musculus</name>
    <name type="common">Mouse</name>
    <dbReference type="NCBI Taxonomy" id="10090"/>
    <lineage>
        <taxon>Eukaryota</taxon>
        <taxon>Metazoa</taxon>
        <taxon>Chordata</taxon>
        <taxon>Craniata</taxon>
        <taxon>Vertebrata</taxon>
        <taxon>Euteleostomi</taxon>
        <taxon>Mammalia</taxon>
        <taxon>Eutheria</taxon>
        <taxon>Euarchontoglires</taxon>
        <taxon>Glires</taxon>
        <taxon>Rodentia</taxon>
        <taxon>Myomorpha</taxon>
        <taxon>Muroidea</taxon>
        <taxon>Muridae</taxon>
        <taxon>Murinae</taxon>
        <taxon>Mus</taxon>
        <taxon>Mus</taxon>
    </lineage>
</organism>
<protein>
    <recommendedName>
        <fullName>Prefoldin subunit 3</fullName>
    </recommendedName>
    <alternativeName>
        <fullName>von Hippel-Lindau-binding protein 1</fullName>
        <shortName>VBP-1</shortName>
        <shortName>VHL-binding protein 1</shortName>
    </alternativeName>
</protein>
<keyword id="KW-0007">Acetylation</keyword>
<keyword id="KW-0143">Chaperone</keyword>
<keyword id="KW-0963">Cytoplasm</keyword>
<keyword id="KW-0539">Nucleus</keyword>
<keyword id="KW-1185">Reference proteome</keyword>
<dbReference type="EMBL" id="AK002282">
    <property type="protein sequence ID" value="BAB21986.1"/>
    <property type="molecule type" value="mRNA"/>
</dbReference>
<dbReference type="EMBL" id="AK008847">
    <property type="protein sequence ID" value="BAB25926.1"/>
    <property type="molecule type" value="mRNA"/>
</dbReference>
<dbReference type="EMBL" id="AK077923">
    <property type="protein sequence ID" value="BAC37066.1"/>
    <property type="molecule type" value="mRNA"/>
</dbReference>
<dbReference type="EMBL" id="AK151527">
    <property type="protein sequence ID" value="BAE30475.1"/>
    <property type="molecule type" value="mRNA"/>
</dbReference>
<dbReference type="EMBL" id="AK153069">
    <property type="protein sequence ID" value="BAE31695.1"/>
    <property type="molecule type" value="mRNA"/>
</dbReference>
<dbReference type="EMBL" id="AK159284">
    <property type="protein sequence ID" value="BAE34961.1"/>
    <property type="molecule type" value="mRNA"/>
</dbReference>
<dbReference type="EMBL" id="AK167064">
    <property type="protein sequence ID" value="BAE39225.1"/>
    <property type="molecule type" value="mRNA"/>
</dbReference>
<dbReference type="EMBL" id="AK169185">
    <property type="protein sequence ID" value="BAE40962.1"/>
    <property type="molecule type" value="mRNA"/>
</dbReference>
<dbReference type="EMBL" id="U96760">
    <property type="protein sequence ID" value="AAC23908.1"/>
    <property type="status" value="ALT_INIT"/>
    <property type="molecule type" value="mRNA"/>
</dbReference>
<dbReference type="CCDS" id="CCDS41032.1"/>
<dbReference type="RefSeq" id="NP_035822.2">
    <property type="nucleotide sequence ID" value="NM_011692.2"/>
</dbReference>
<dbReference type="SMR" id="P61759"/>
<dbReference type="BioGRID" id="204503">
    <property type="interactions" value="27"/>
</dbReference>
<dbReference type="FunCoup" id="P61759">
    <property type="interactions" value="2480"/>
</dbReference>
<dbReference type="IntAct" id="P61759">
    <property type="interactions" value="10"/>
</dbReference>
<dbReference type="STRING" id="10090.ENSMUSP00000033540"/>
<dbReference type="GlyGen" id="P61759">
    <property type="glycosylation" value="1 site, 1 O-linked glycan (1 site)"/>
</dbReference>
<dbReference type="iPTMnet" id="P61759"/>
<dbReference type="PhosphoSitePlus" id="P61759"/>
<dbReference type="SwissPalm" id="P61759"/>
<dbReference type="REPRODUCTION-2DPAGE" id="IPI00121851"/>
<dbReference type="REPRODUCTION-2DPAGE" id="P61759"/>
<dbReference type="jPOST" id="P61759"/>
<dbReference type="PaxDb" id="10090-ENSMUSP00000033540"/>
<dbReference type="ProteomicsDB" id="287918"/>
<dbReference type="Pumba" id="P61759"/>
<dbReference type="Antibodypedia" id="3341">
    <property type="antibodies" value="393 antibodies from 29 providers"/>
</dbReference>
<dbReference type="DNASU" id="22327"/>
<dbReference type="Ensembl" id="ENSMUST00000033540.6">
    <property type="protein sequence ID" value="ENSMUSP00000033540.6"/>
    <property type="gene ID" value="ENSMUSG00000031197.12"/>
</dbReference>
<dbReference type="GeneID" id="22327"/>
<dbReference type="KEGG" id="mmu:22327"/>
<dbReference type="UCSC" id="uc009tqd.1">
    <property type="organism name" value="mouse"/>
</dbReference>
<dbReference type="AGR" id="MGI:1333804"/>
<dbReference type="CTD" id="7411"/>
<dbReference type="MGI" id="MGI:1333804">
    <property type="gene designation" value="Vbp1"/>
</dbReference>
<dbReference type="VEuPathDB" id="HostDB:ENSMUSG00000031197"/>
<dbReference type="eggNOG" id="KOG3313">
    <property type="taxonomic scope" value="Eukaryota"/>
</dbReference>
<dbReference type="GeneTree" id="ENSGT00390000018904"/>
<dbReference type="HOGENOM" id="CLU_083737_1_0_1"/>
<dbReference type="InParanoid" id="P61759"/>
<dbReference type="OMA" id="YNWDVAQ"/>
<dbReference type="OrthoDB" id="6375174at2759"/>
<dbReference type="PhylomeDB" id="P61759"/>
<dbReference type="TreeFam" id="TF313706"/>
<dbReference type="BioGRID-ORCS" id="22327">
    <property type="hits" value="13 hits in 78 CRISPR screens"/>
</dbReference>
<dbReference type="ChiTaRS" id="Vbp1">
    <property type="organism name" value="mouse"/>
</dbReference>
<dbReference type="PRO" id="PR:P61759"/>
<dbReference type="Proteomes" id="UP000000589">
    <property type="component" value="Chromosome X"/>
</dbReference>
<dbReference type="RNAct" id="P61759">
    <property type="molecule type" value="protein"/>
</dbReference>
<dbReference type="Bgee" id="ENSMUSG00000031197">
    <property type="expression patterns" value="Expressed in superior cervical ganglion and 273 other cell types or tissues"/>
</dbReference>
<dbReference type="ExpressionAtlas" id="P61759">
    <property type="expression patterns" value="baseline and differential"/>
</dbReference>
<dbReference type="GO" id="GO:0005737">
    <property type="term" value="C:cytoplasm"/>
    <property type="evidence" value="ECO:0000304"/>
    <property type="project" value="MGI"/>
</dbReference>
<dbReference type="GO" id="GO:0005829">
    <property type="term" value="C:cytosol"/>
    <property type="evidence" value="ECO:0007669"/>
    <property type="project" value="Ensembl"/>
</dbReference>
<dbReference type="GO" id="GO:0005634">
    <property type="term" value="C:nucleus"/>
    <property type="evidence" value="ECO:0000304"/>
    <property type="project" value="MGI"/>
</dbReference>
<dbReference type="GO" id="GO:0016272">
    <property type="term" value="C:prefoldin complex"/>
    <property type="evidence" value="ECO:0007669"/>
    <property type="project" value="Ensembl"/>
</dbReference>
<dbReference type="GO" id="GO:0001540">
    <property type="term" value="F:amyloid-beta binding"/>
    <property type="evidence" value="ECO:0007669"/>
    <property type="project" value="Ensembl"/>
</dbReference>
<dbReference type="GO" id="GO:0051082">
    <property type="term" value="F:unfolded protein binding"/>
    <property type="evidence" value="ECO:0007669"/>
    <property type="project" value="Ensembl"/>
</dbReference>
<dbReference type="GO" id="GO:1905907">
    <property type="term" value="P:negative regulation of amyloid fibril formation"/>
    <property type="evidence" value="ECO:0007669"/>
    <property type="project" value="Ensembl"/>
</dbReference>
<dbReference type="GO" id="GO:0006457">
    <property type="term" value="P:protein folding"/>
    <property type="evidence" value="ECO:0007669"/>
    <property type="project" value="Ensembl"/>
</dbReference>
<dbReference type="CDD" id="cd23156">
    <property type="entry name" value="Prefoldin_3"/>
    <property type="match status" value="1"/>
</dbReference>
<dbReference type="FunFam" id="1.10.287.370:FF:000001">
    <property type="entry name" value="Prefoldin subunit 3"/>
    <property type="match status" value="1"/>
</dbReference>
<dbReference type="Gene3D" id="1.10.287.370">
    <property type="match status" value="1"/>
</dbReference>
<dbReference type="InterPro" id="IPR016655">
    <property type="entry name" value="PFD3"/>
</dbReference>
<dbReference type="InterPro" id="IPR009053">
    <property type="entry name" value="Prefoldin"/>
</dbReference>
<dbReference type="InterPro" id="IPR004127">
    <property type="entry name" value="Prefoldin_subunit_alpha"/>
</dbReference>
<dbReference type="PANTHER" id="PTHR12409">
    <property type="entry name" value="PREFOLDIN SUBUNIT 3"/>
    <property type="match status" value="1"/>
</dbReference>
<dbReference type="PANTHER" id="PTHR12409:SF0">
    <property type="entry name" value="PREFOLDIN SUBUNIT 3"/>
    <property type="match status" value="1"/>
</dbReference>
<dbReference type="Pfam" id="PF02996">
    <property type="entry name" value="Prefoldin"/>
    <property type="match status" value="1"/>
</dbReference>
<dbReference type="PIRSF" id="PIRSF016396">
    <property type="entry name" value="Prefoldin_subunit_3"/>
    <property type="match status" value="1"/>
</dbReference>
<dbReference type="SUPFAM" id="SSF46579">
    <property type="entry name" value="Prefoldin"/>
    <property type="match status" value="1"/>
</dbReference>
<gene>
    <name type="primary">Vbp1</name>
    <name type="synonym">Pfdn3</name>
</gene>
<proteinExistence type="evidence at protein level"/>
<comment type="function">
    <text evidence="1">Binds specifically to cytosolic chaperonin (c-CPN) and transfers target proteins to it. Binds to nascent polypeptide chain and promotes folding in an environment in which there are many competing pathways for nonnative proteins (By similarity).</text>
</comment>
<comment type="subunit">
    <text>Heterohexamer of two PFD-alpha type and four PFD-beta type subunits. Binds to the C-terminal part of VHL.</text>
</comment>
<comment type="subcellular location">
    <subcellularLocation>
        <location>Cytoplasm</location>
    </subcellularLocation>
    <subcellularLocation>
        <location>Nucleus</location>
    </subcellularLocation>
    <text>In complex with VHL can translocate to the nucleus.</text>
</comment>
<comment type="similarity">
    <text evidence="3">Belongs to the prefoldin subunit alpha family.</text>
</comment>
<comment type="sequence caution" evidence="3">
    <conflict type="erroneous initiation">
        <sequence resource="EMBL-CDS" id="AAC23908"/>
    </conflict>
</comment>
<evidence type="ECO:0000250" key="1"/>
<evidence type="ECO:0000250" key="2">
    <source>
        <dbReference type="UniProtKB" id="P61758"/>
    </source>
</evidence>
<evidence type="ECO:0000305" key="3"/>